<protein>
    <recommendedName>
        <fullName evidence="1">DNA ligase</fullName>
        <ecNumber evidence="1">6.5.1.2</ecNumber>
    </recommendedName>
    <alternativeName>
        <fullName evidence="1">Polydeoxyribonucleotide synthase [NAD(+)]</fullName>
    </alternativeName>
</protein>
<keyword id="KW-0227">DNA damage</keyword>
<keyword id="KW-0234">DNA repair</keyword>
<keyword id="KW-0235">DNA replication</keyword>
<keyword id="KW-0436">Ligase</keyword>
<keyword id="KW-0460">Magnesium</keyword>
<keyword id="KW-0464">Manganese</keyword>
<keyword id="KW-0479">Metal-binding</keyword>
<keyword id="KW-0520">NAD</keyword>
<keyword id="KW-1185">Reference proteome</keyword>
<keyword id="KW-0862">Zinc</keyword>
<sequence>MTGMQHGLFSPPAPAGLAEKVEALRATIRRYDYEYYVLNAPSVPDSEYDRVFRELKALEDAHPELVTPDSPTQRVGGAAMAELMPVRHHVPMLSIETETDTTPQGAYNFDARVRKKLGLLPEDGPIEYAAELKFDGLAMSLRYEHGLLVQAATRGDGEVGEDVTHNIRTMRQIPLQLHGEAPEVLEVRGEVYMSRPDFERYNARQREHGKPTLVNPRNGAAGSIRQLDPRLAAQRPLSFFAYGLGETKGWQVPLTHAQVLDALKALGLPVCNERAVGMGAEALAAFHQAISAKRDQLPYDIDGVVYKVNRLDLQRELGFRSREPNWAVAHKFPAQEEMTVLEHIDVQVGRTGAITPVARLKPVFVGGVTVTNATLHNQDEIDRKDVRIGDTVVVRRAGDVIPEVVSVIKERRPAGSQPYILLDAIGGLCPVCGSHAVRLPEEAAVRCTGGLFCAAQRKQAILHFASRRAMDIEGLGEKLVDQLVDQNMVETLADLYDPGKINLETLSGLDRMAMKSAQNLLDALQKSKQATLNRFIYALGIRNVGEATAKDLARHFGRLDALQAADVDTLQQVPDVGPVVARSIAEFFAEEHNREVIRKLRDAGIHWSETDGQPASSSKLEGKTFVLTGTLPTMSRDEAKEKIEAAGGKVSGSVSKKTSYVVAGSDAGSKLAKAQELGLAILDEEGLLSLLAE</sequence>
<organism>
    <name type="scientific">Methylobacillus flagellatus (strain ATCC 51484 / DSM 6875 / VKM B-1610 / KT)</name>
    <dbReference type="NCBI Taxonomy" id="265072"/>
    <lineage>
        <taxon>Bacteria</taxon>
        <taxon>Pseudomonadati</taxon>
        <taxon>Pseudomonadota</taxon>
        <taxon>Betaproteobacteria</taxon>
        <taxon>Nitrosomonadales</taxon>
        <taxon>Methylophilaceae</taxon>
        <taxon>Methylobacillus</taxon>
    </lineage>
</organism>
<name>DNLJ_METFK</name>
<proteinExistence type="inferred from homology"/>
<gene>
    <name evidence="1" type="primary">ligA</name>
    <name type="ordered locus">Mfla_1403</name>
</gene>
<feature type="chain" id="PRO_0000313307" description="DNA ligase">
    <location>
        <begin position="1"/>
        <end position="693"/>
    </location>
</feature>
<feature type="domain" description="BRCT" evidence="1">
    <location>
        <begin position="615"/>
        <end position="693"/>
    </location>
</feature>
<feature type="active site" description="N6-AMP-lysine intermediate" evidence="1">
    <location>
        <position position="133"/>
    </location>
</feature>
<feature type="binding site" evidence="1">
    <location>
        <begin position="45"/>
        <end position="49"/>
    </location>
    <ligand>
        <name>NAD(+)</name>
        <dbReference type="ChEBI" id="CHEBI:57540"/>
    </ligand>
</feature>
<feature type="binding site" evidence="1">
    <location>
        <begin position="94"/>
        <end position="95"/>
    </location>
    <ligand>
        <name>NAD(+)</name>
        <dbReference type="ChEBI" id="CHEBI:57540"/>
    </ligand>
</feature>
<feature type="binding site" evidence="1">
    <location>
        <position position="131"/>
    </location>
    <ligand>
        <name>NAD(+)</name>
        <dbReference type="ChEBI" id="CHEBI:57540"/>
    </ligand>
</feature>
<feature type="binding site" evidence="1">
    <location>
        <position position="154"/>
    </location>
    <ligand>
        <name>NAD(+)</name>
        <dbReference type="ChEBI" id="CHEBI:57540"/>
    </ligand>
</feature>
<feature type="binding site" evidence="1">
    <location>
        <position position="190"/>
    </location>
    <ligand>
        <name>NAD(+)</name>
        <dbReference type="ChEBI" id="CHEBI:57540"/>
    </ligand>
</feature>
<feature type="binding site" evidence="1">
    <location>
        <position position="307"/>
    </location>
    <ligand>
        <name>NAD(+)</name>
        <dbReference type="ChEBI" id="CHEBI:57540"/>
    </ligand>
</feature>
<feature type="binding site" evidence="1">
    <location>
        <position position="331"/>
    </location>
    <ligand>
        <name>NAD(+)</name>
        <dbReference type="ChEBI" id="CHEBI:57540"/>
    </ligand>
</feature>
<feature type="binding site" evidence="1">
    <location>
        <position position="429"/>
    </location>
    <ligand>
        <name>Zn(2+)</name>
        <dbReference type="ChEBI" id="CHEBI:29105"/>
    </ligand>
</feature>
<feature type="binding site" evidence="1">
    <location>
        <position position="432"/>
    </location>
    <ligand>
        <name>Zn(2+)</name>
        <dbReference type="ChEBI" id="CHEBI:29105"/>
    </ligand>
</feature>
<feature type="binding site" evidence="1">
    <location>
        <position position="447"/>
    </location>
    <ligand>
        <name>Zn(2+)</name>
        <dbReference type="ChEBI" id="CHEBI:29105"/>
    </ligand>
</feature>
<feature type="binding site" evidence="1">
    <location>
        <position position="453"/>
    </location>
    <ligand>
        <name>Zn(2+)</name>
        <dbReference type="ChEBI" id="CHEBI:29105"/>
    </ligand>
</feature>
<dbReference type="EC" id="6.5.1.2" evidence="1"/>
<dbReference type="EMBL" id="CP000284">
    <property type="protein sequence ID" value="ABE49671.1"/>
    <property type="molecule type" value="Genomic_DNA"/>
</dbReference>
<dbReference type="RefSeq" id="WP_011479625.1">
    <property type="nucleotide sequence ID" value="NC_007947.1"/>
</dbReference>
<dbReference type="SMR" id="Q1H1G6"/>
<dbReference type="STRING" id="265072.Mfla_1403"/>
<dbReference type="KEGG" id="mfa:Mfla_1403"/>
<dbReference type="eggNOG" id="COG0272">
    <property type="taxonomic scope" value="Bacteria"/>
</dbReference>
<dbReference type="HOGENOM" id="CLU_007764_2_1_4"/>
<dbReference type="Proteomes" id="UP000002440">
    <property type="component" value="Chromosome"/>
</dbReference>
<dbReference type="GO" id="GO:0003677">
    <property type="term" value="F:DNA binding"/>
    <property type="evidence" value="ECO:0007669"/>
    <property type="project" value="InterPro"/>
</dbReference>
<dbReference type="GO" id="GO:0003911">
    <property type="term" value="F:DNA ligase (NAD+) activity"/>
    <property type="evidence" value="ECO:0007669"/>
    <property type="project" value="UniProtKB-UniRule"/>
</dbReference>
<dbReference type="GO" id="GO:0046872">
    <property type="term" value="F:metal ion binding"/>
    <property type="evidence" value="ECO:0007669"/>
    <property type="project" value="UniProtKB-KW"/>
</dbReference>
<dbReference type="GO" id="GO:0006281">
    <property type="term" value="P:DNA repair"/>
    <property type="evidence" value="ECO:0007669"/>
    <property type="project" value="UniProtKB-KW"/>
</dbReference>
<dbReference type="GO" id="GO:0006260">
    <property type="term" value="P:DNA replication"/>
    <property type="evidence" value="ECO:0007669"/>
    <property type="project" value="UniProtKB-KW"/>
</dbReference>
<dbReference type="CDD" id="cd17748">
    <property type="entry name" value="BRCT_DNA_ligase_like"/>
    <property type="match status" value="1"/>
</dbReference>
<dbReference type="CDD" id="cd00114">
    <property type="entry name" value="LIGANc"/>
    <property type="match status" value="1"/>
</dbReference>
<dbReference type="FunFam" id="1.10.150.20:FF:000006">
    <property type="entry name" value="DNA ligase"/>
    <property type="match status" value="1"/>
</dbReference>
<dbReference type="FunFam" id="1.10.150.20:FF:000007">
    <property type="entry name" value="DNA ligase"/>
    <property type="match status" value="1"/>
</dbReference>
<dbReference type="FunFam" id="1.10.287.610:FF:000002">
    <property type="entry name" value="DNA ligase"/>
    <property type="match status" value="1"/>
</dbReference>
<dbReference type="FunFam" id="2.40.50.140:FF:000012">
    <property type="entry name" value="DNA ligase"/>
    <property type="match status" value="1"/>
</dbReference>
<dbReference type="FunFam" id="3.30.470.30:FF:000001">
    <property type="entry name" value="DNA ligase"/>
    <property type="match status" value="1"/>
</dbReference>
<dbReference type="FunFam" id="3.40.50.10190:FF:000054">
    <property type="entry name" value="DNA ligase"/>
    <property type="match status" value="1"/>
</dbReference>
<dbReference type="Gene3D" id="6.20.10.30">
    <property type="match status" value="1"/>
</dbReference>
<dbReference type="Gene3D" id="1.10.150.20">
    <property type="entry name" value="5' to 3' exonuclease, C-terminal subdomain"/>
    <property type="match status" value="2"/>
</dbReference>
<dbReference type="Gene3D" id="3.40.50.10190">
    <property type="entry name" value="BRCT domain"/>
    <property type="match status" value="1"/>
</dbReference>
<dbReference type="Gene3D" id="3.30.470.30">
    <property type="entry name" value="DNA ligase/mRNA capping enzyme"/>
    <property type="match status" value="1"/>
</dbReference>
<dbReference type="Gene3D" id="1.10.287.610">
    <property type="entry name" value="Helix hairpin bin"/>
    <property type="match status" value="1"/>
</dbReference>
<dbReference type="Gene3D" id="2.40.50.140">
    <property type="entry name" value="Nucleic acid-binding proteins"/>
    <property type="match status" value="1"/>
</dbReference>
<dbReference type="HAMAP" id="MF_01588">
    <property type="entry name" value="DNA_ligase_A"/>
    <property type="match status" value="1"/>
</dbReference>
<dbReference type="InterPro" id="IPR001357">
    <property type="entry name" value="BRCT_dom"/>
</dbReference>
<dbReference type="InterPro" id="IPR036420">
    <property type="entry name" value="BRCT_dom_sf"/>
</dbReference>
<dbReference type="InterPro" id="IPR041663">
    <property type="entry name" value="DisA/LigA_HHH"/>
</dbReference>
<dbReference type="InterPro" id="IPR001679">
    <property type="entry name" value="DNA_ligase"/>
</dbReference>
<dbReference type="InterPro" id="IPR018239">
    <property type="entry name" value="DNA_ligase_AS"/>
</dbReference>
<dbReference type="InterPro" id="IPR033136">
    <property type="entry name" value="DNA_ligase_CS"/>
</dbReference>
<dbReference type="InterPro" id="IPR013839">
    <property type="entry name" value="DNAligase_adenylation"/>
</dbReference>
<dbReference type="InterPro" id="IPR013840">
    <property type="entry name" value="DNAligase_N"/>
</dbReference>
<dbReference type="InterPro" id="IPR003583">
    <property type="entry name" value="Hlx-hairpin-Hlx_DNA-bd_motif"/>
</dbReference>
<dbReference type="InterPro" id="IPR012340">
    <property type="entry name" value="NA-bd_OB-fold"/>
</dbReference>
<dbReference type="InterPro" id="IPR004150">
    <property type="entry name" value="NAD_DNA_ligase_OB"/>
</dbReference>
<dbReference type="InterPro" id="IPR010994">
    <property type="entry name" value="RuvA_2-like"/>
</dbReference>
<dbReference type="InterPro" id="IPR004149">
    <property type="entry name" value="Znf_DNAligase_C4"/>
</dbReference>
<dbReference type="NCBIfam" id="TIGR00575">
    <property type="entry name" value="dnlj"/>
    <property type="match status" value="1"/>
</dbReference>
<dbReference type="NCBIfam" id="NF005932">
    <property type="entry name" value="PRK07956.1"/>
    <property type="match status" value="1"/>
</dbReference>
<dbReference type="PANTHER" id="PTHR23389">
    <property type="entry name" value="CHROMOSOME TRANSMISSION FIDELITY FACTOR 18"/>
    <property type="match status" value="1"/>
</dbReference>
<dbReference type="PANTHER" id="PTHR23389:SF6">
    <property type="entry name" value="REPLICATION FACTOR C SUBUNIT 1"/>
    <property type="match status" value="1"/>
</dbReference>
<dbReference type="Pfam" id="PF00533">
    <property type="entry name" value="BRCT"/>
    <property type="match status" value="1"/>
</dbReference>
<dbReference type="Pfam" id="PF01653">
    <property type="entry name" value="DNA_ligase_aden"/>
    <property type="match status" value="1"/>
</dbReference>
<dbReference type="Pfam" id="PF03120">
    <property type="entry name" value="DNA_ligase_OB"/>
    <property type="match status" value="1"/>
</dbReference>
<dbReference type="Pfam" id="PF03119">
    <property type="entry name" value="DNA_ligase_ZBD"/>
    <property type="match status" value="1"/>
</dbReference>
<dbReference type="Pfam" id="PF12826">
    <property type="entry name" value="HHH_2"/>
    <property type="match status" value="1"/>
</dbReference>
<dbReference type="Pfam" id="PF22745">
    <property type="entry name" value="Nlig-Ia"/>
    <property type="match status" value="1"/>
</dbReference>
<dbReference type="PIRSF" id="PIRSF001604">
    <property type="entry name" value="LigA"/>
    <property type="match status" value="1"/>
</dbReference>
<dbReference type="SMART" id="SM00292">
    <property type="entry name" value="BRCT"/>
    <property type="match status" value="1"/>
</dbReference>
<dbReference type="SMART" id="SM00278">
    <property type="entry name" value="HhH1"/>
    <property type="match status" value="4"/>
</dbReference>
<dbReference type="SMART" id="SM00532">
    <property type="entry name" value="LIGANc"/>
    <property type="match status" value="1"/>
</dbReference>
<dbReference type="SUPFAM" id="SSF52113">
    <property type="entry name" value="BRCT domain"/>
    <property type="match status" value="1"/>
</dbReference>
<dbReference type="SUPFAM" id="SSF56091">
    <property type="entry name" value="DNA ligase/mRNA capping enzyme, catalytic domain"/>
    <property type="match status" value="1"/>
</dbReference>
<dbReference type="SUPFAM" id="SSF50249">
    <property type="entry name" value="Nucleic acid-binding proteins"/>
    <property type="match status" value="1"/>
</dbReference>
<dbReference type="SUPFAM" id="SSF47781">
    <property type="entry name" value="RuvA domain 2-like"/>
    <property type="match status" value="1"/>
</dbReference>
<dbReference type="PROSITE" id="PS50172">
    <property type="entry name" value="BRCT"/>
    <property type="match status" value="1"/>
</dbReference>
<dbReference type="PROSITE" id="PS01055">
    <property type="entry name" value="DNA_LIGASE_N1"/>
    <property type="match status" value="1"/>
</dbReference>
<dbReference type="PROSITE" id="PS01056">
    <property type="entry name" value="DNA_LIGASE_N2"/>
    <property type="match status" value="1"/>
</dbReference>
<comment type="function">
    <text evidence="1">DNA ligase that catalyzes the formation of phosphodiester linkages between 5'-phosphoryl and 3'-hydroxyl groups in double-stranded DNA using NAD as a coenzyme and as the energy source for the reaction. It is essential for DNA replication and repair of damaged DNA.</text>
</comment>
<comment type="catalytic activity">
    <reaction evidence="1">
        <text>NAD(+) + (deoxyribonucleotide)n-3'-hydroxyl + 5'-phospho-(deoxyribonucleotide)m = (deoxyribonucleotide)n+m + AMP + beta-nicotinamide D-nucleotide.</text>
        <dbReference type="EC" id="6.5.1.2"/>
    </reaction>
</comment>
<comment type="cofactor">
    <cofactor evidence="1">
        <name>Mg(2+)</name>
        <dbReference type="ChEBI" id="CHEBI:18420"/>
    </cofactor>
    <cofactor evidence="1">
        <name>Mn(2+)</name>
        <dbReference type="ChEBI" id="CHEBI:29035"/>
    </cofactor>
</comment>
<comment type="similarity">
    <text evidence="1">Belongs to the NAD-dependent DNA ligase family. LigA subfamily.</text>
</comment>
<reference key="1">
    <citation type="submission" date="2006-03" db="EMBL/GenBank/DDBJ databases">
        <title>Complete sequence of Methylobacillus flagellatus KT.</title>
        <authorList>
            <consortium name="US DOE Joint Genome Institute"/>
            <person name="Copeland A."/>
            <person name="Lucas S."/>
            <person name="Lapidus A."/>
            <person name="Barry K."/>
            <person name="Detter J.C."/>
            <person name="Glavina del Rio T."/>
            <person name="Hammon N."/>
            <person name="Israni S."/>
            <person name="Dalin E."/>
            <person name="Tice H."/>
            <person name="Pitluck S."/>
            <person name="Brettin T."/>
            <person name="Bruce D."/>
            <person name="Han C."/>
            <person name="Tapia R."/>
            <person name="Saunders E."/>
            <person name="Gilna P."/>
            <person name="Schmutz J."/>
            <person name="Larimer F."/>
            <person name="Land M."/>
            <person name="Kyrpides N."/>
            <person name="Anderson I."/>
            <person name="Richardson P."/>
        </authorList>
    </citation>
    <scope>NUCLEOTIDE SEQUENCE [LARGE SCALE GENOMIC DNA]</scope>
    <source>
        <strain>ATCC 51484 / DSM 6875 / VKM B-1610 / KT</strain>
    </source>
</reference>
<evidence type="ECO:0000255" key="1">
    <source>
        <dbReference type="HAMAP-Rule" id="MF_01588"/>
    </source>
</evidence>
<accession>Q1H1G6</accession>